<sequence>MSRSAPLLLNPISAISGTVNVPGSKSLSNRALLLAAVANGETHLTNLLDSEDIRHMLKALTQLGVNYRLSDDKTECWVQGLGRGFSVDNLETLFLGNAGTAMRPLCAVLATSIGEFELTGEPRMEERPIGALVDSLRQAGAQITYLKNEGYPPLKMKGMALKGGNISVEGAVSSQFLTALLMAAPLFEHDSVINIVGELVSKPYIDITLNTMAQFGITVENNNYQSFTVKGNQQYQAAGDFLVEGDASSASYFLAAGAIKGGTVRVTGVGKKSIQGDIRFADVLEKMGAKITWGDDYIEVTGAPLTAVDMDMNHIPDAAMTIATTALFAEGTTSIRNIYNWRVKETDRLAAMACELRKVGAEVIEGQDYITITPPNTLIQTDIDTYDDHRVAMCFSLVALSDTPVTINDPDCTAKTFPDYFTRLKQISA</sequence>
<keyword id="KW-0028">Amino-acid biosynthesis</keyword>
<keyword id="KW-0057">Aromatic amino acid biosynthesis</keyword>
<keyword id="KW-0963">Cytoplasm</keyword>
<keyword id="KW-0808">Transferase</keyword>
<gene>
    <name evidence="1" type="primary">aroA</name>
    <name type="ordered locus">Patl_2468</name>
</gene>
<feature type="chain" id="PRO_0000325375" description="3-phosphoshikimate 1-carboxyvinyltransferase">
    <location>
        <begin position="1"/>
        <end position="429"/>
    </location>
</feature>
<feature type="active site" description="Proton acceptor" evidence="1">
    <location>
        <position position="317"/>
    </location>
</feature>
<feature type="binding site" evidence="1">
    <location>
        <position position="25"/>
    </location>
    <ligand>
        <name>3-phosphoshikimate</name>
        <dbReference type="ChEBI" id="CHEBI:145989"/>
    </ligand>
</feature>
<feature type="binding site" evidence="1">
    <location>
        <position position="25"/>
    </location>
    <ligand>
        <name>phosphoenolpyruvate</name>
        <dbReference type="ChEBI" id="CHEBI:58702"/>
    </ligand>
</feature>
<feature type="binding site" evidence="1">
    <location>
        <position position="26"/>
    </location>
    <ligand>
        <name>3-phosphoshikimate</name>
        <dbReference type="ChEBI" id="CHEBI:145989"/>
    </ligand>
</feature>
<feature type="binding site" evidence="1">
    <location>
        <position position="30"/>
    </location>
    <ligand>
        <name>3-phosphoshikimate</name>
        <dbReference type="ChEBI" id="CHEBI:145989"/>
    </ligand>
</feature>
<feature type="binding site" evidence="1">
    <location>
        <position position="99"/>
    </location>
    <ligand>
        <name>phosphoenolpyruvate</name>
        <dbReference type="ChEBI" id="CHEBI:58702"/>
    </ligand>
</feature>
<feature type="binding site" evidence="1">
    <location>
        <position position="127"/>
    </location>
    <ligand>
        <name>phosphoenolpyruvate</name>
        <dbReference type="ChEBI" id="CHEBI:58702"/>
    </ligand>
</feature>
<feature type="binding site" evidence="1">
    <location>
        <position position="173"/>
    </location>
    <ligand>
        <name>3-phosphoshikimate</name>
        <dbReference type="ChEBI" id="CHEBI:145989"/>
    </ligand>
</feature>
<feature type="binding site" evidence="1">
    <location>
        <position position="174"/>
    </location>
    <ligand>
        <name>3-phosphoshikimate</name>
        <dbReference type="ChEBI" id="CHEBI:145989"/>
    </ligand>
</feature>
<feature type="binding site" evidence="1">
    <location>
        <position position="175"/>
    </location>
    <ligand>
        <name>3-phosphoshikimate</name>
        <dbReference type="ChEBI" id="CHEBI:145989"/>
    </ligand>
</feature>
<feature type="binding site" evidence="1">
    <location>
        <position position="175"/>
    </location>
    <ligand>
        <name>phosphoenolpyruvate</name>
        <dbReference type="ChEBI" id="CHEBI:58702"/>
    </ligand>
</feature>
<feature type="binding site" evidence="1">
    <location>
        <position position="201"/>
    </location>
    <ligand>
        <name>3-phosphoshikimate</name>
        <dbReference type="ChEBI" id="CHEBI:145989"/>
    </ligand>
</feature>
<feature type="binding site" evidence="1">
    <location>
        <position position="317"/>
    </location>
    <ligand>
        <name>3-phosphoshikimate</name>
        <dbReference type="ChEBI" id="CHEBI:145989"/>
    </ligand>
</feature>
<feature type="binding site" evidence="1">
    <location>
        <position position="340"/>
    </location>
    <ligand>
        <name>3-phosphoshikimate</name>
        <dbReference type="ChEBI" id="CHEBI:145989"/>
    </ligand>
</feature>
<feature type="binding site" evidence="1">
    <location>
        <position position="344"/>
    </location>
    <ligand>
        <name>3-phosphoshikimate</name>
        <dbReference type="ChEBI" id="CHEBI:145989"/>
    </ligand>
</feature>
<feature type="binding site" evidence="1">
    <location>
        <position position="348"/>
    </location>
    <ligand>
        <name>phosphoenolpyruvate</name>
        <dbReference type="ChEBI" id="CHEBI:58702"/>
    </ligand>
</feature>
<feature type="binding site" evidence="1">
    <location>
        <position position="390"/>
    </location>
    <ligand>
        <name>phosphoenolpyruvate</name>
        <dbReference type="ChEBI" id="CHEBI:58702"/>
    </ligand>
</feature>
<feature type="binding site" evidence="1">
    <location>
        <position position="415"/>
    </location>
    <ligand>
        <name>phosphoenolpyruvate</name>
        <dbReference type="ChEBI" id="CHEBI:58702"/>
    </ligand>
</feature>
<evidence type="ECO:0000255" key="1">
    <source>
        <dbReference type="HAMAP-Rule" id="MF_00210"/>
    </source>
</evidence>
<reference key="1">
    <citation type="submission" date="2006-06" db="EMBL/GenBank/DDBJ databases">
        <title>Complete sequence of Pseudoalteromonas atlantica T6c.</title>
        <authorList>
            <consortium name="US DOE Joint Genome Institute"/>
            <person name="Copeland A."/>
            <person name="Lucas S."/>
            <person name="Lapidus A."/>
            <person name="Barry K."/>
            <person name="Detter J.C."/>
            <person name="Glavina del Rio T."/>
            <person name="Hammon N."/>
            <person name="Israni S."/>
            <person name="Dalin E."/>
            <person name="Tice H."/>
            <person name="Pitluck S."/>
            <person name="Saunders E."/>
            <person name="Brettin T."/>
            <person name="Bruce D."/>
            <person name="Han C."/>
            <person name="Tapia R."/>
            <person name="Gilna P."/>
            <person name="Schmutz J."/>
            <person name="Larimer F."/>
            <person name="Land M."/>
            <person name="Hauser L."/>
            <person name="Kyrpides N."/>
            <person name="Kim E."/>
            <person name="Karls A.C."/>
            <person name="Bartlett D."/>
            <person name="Higgins B.P."/>
            <person name="Richardson P."/>
        </authorList>
    </citation>
    <scope>NUCLEOTIDE SEQUENCE [LARGE SCALE GENOMIC DNA]</scope>
    <source>
        <strain>T6c / ATCC BAA-1087</strain>
    </source>
</reference>
<protein>
    <recommendedName>
        <fullName evidence="1">3-phosphoshikimate 1-carboxyvinyltransferase</fullName>
        <ecNumber evidence="1">2.5.1.19</ecNumber>
    </recommendedName>
    <alternativeName>
        <fullName evidence="1">5-enolpyruvylshikimate-3-phosphate synthase</fullName>
        <shortName evidence="1">EPSP synthase</shortName>
        <shortName evidence="1">EPSPS</shortName>
    </alternativeName>
</protein>
<comment type="function">
    <text evidence="1">Catalyzes the transfer of the enolpyruvyl moiety of phosphoenolpyruvate (PEP) to the 5-hydroxyl of shikimate-3-phosphate (S3P) to produce enolpyruvyl shikimate-3-phosphate and inorganic phosphate.</text>
</comment>
<comment type="catalytic activity">
    <reaction evidence="1">
        <text>3-phosphoshikimate + phosphoenolpyruvate = 5-O-(1-carboxyvinyl)-3-phosphoshikimate + phosphate</text>
        <dbReference type="Rhea" id="RHEA:21256"/>
        <dbReference type="ChEBI" id="CHEBI:43474"/>
        <dbReference type="ChEBI" id="CHEBI:57701"/>
        <dbReference type="ChEBI" id="CHEBI:58702"/>
        <dbReference type="ChEBI" id="CHEBI:145989"/>
        <dbReference type="EC" id="2.5.1.19"/>
    </reaction>
    <physiologicalReaction direction="left-to-right" evidence="1">
        <dbReference type="Rhea" id="RHEA:21257"/>
    </physiologicalReaction>
</comment>
<comment type="pathway">
    <text evidence="1">Metabolic intermediate biosynthesis; chorismate biosynthesis; chorismate from D-erythrose 4-phosphate and phosphoenolpyruvate: step 6/7.</text>
</comment>
<comment type="subunit">
    <text evidence="1">Monomer.</text>
</comment>
<comment type="subcellular location">
    <subcellularLocation>
        <location evidence="1">Cytoplasm</location>
    </subcellularLocation>
</comment>
<comment type="similarity">
    <text evidence="1">Belongs to the EPSP synthase family.</text>
</comment>
<proteinExistence type="inferred from homology"/>
<organism>
    <name type="scientific">Pseudoalteromonas atlantica (strain T6c / ATCC BAA-1087)</name>
    <dbReference type="NCBI Taxonomy" id="3042615"/>
    <lineage>
        <taxon>Bacteria</taxon>
        <taxon>Pseudomonadati</taxon>
        <taxon>Pseudomonadota</taxon>
        <taxon>Gammaproteobacteria</taxon>
        <taxon>Alteromonadales</taxon>
        <taxon>Alteromonadaceae</taxon>
        <taxon>Paraglaciecola</taxon>
    </lineage>
</organism>
<name>AROA_PSEA6</name>
<accession>Q15T04</accession>
<dbReference type="EC" id="2.5.1.19" evidence="1"/>
<dbReference type="EMBL" id="CP000388">
    <property type="protein sequence ID" value="ABG40984.1"/>
    <property type="molecule type" value="Genomic_DNA"/>
</dbReference>
<dbReference type="RefSeq" id="WP_011575255.1">
    <property type="nucleotide sequence ID" value="NC_008228.1"/>
</dbReference>
<dbReference type="SMR" id="Q15T04"/>
<dbReference type="STRING" id="342610.Patl_2468"/>
<dbReference type="KEGG" id="pat:Patl_2468"/>
<dbReference type="eggNOG" id="COG0128">
    <property type="taxonomic scope" value="Bacteria"/>
</dbReference>
<dbReference type="HOGENOM" id="CLU_024321_0_0_6"/>
<dbReference type="OrthoDB" id="9809920at2"/>
<dbReference type="UniPathway" id="UPA00053">
    <property type="reaction ID" value="UER00089"/>
</dbReference>
<dbReference type="Proteomes" id="UP000001981">
    <property type="component" value="Chromosome"/>
</dbReference>
<dbReference type="GO" id="GO:0005737">
    <property type="term" value="C:cytoplasm"/>
    <property type="evidence" value="ECO:0007669"/>
    <property type="project" value="UniProtKB-SubCell"/>
</dbReference>
<dbReference type="GO" id="GO:0003866">
    <property type="term" value="F:3-phosphoshikimate 1-carboxyvinyltransferase activity"/>
    <property type="evidence" value="ECO:0007669"/>
    <property type="project" value="UniProtKB-UniRule"/>
</dbReference>
<dbReference type="GO" id="GO:0008652">
    <property type="term" value="P:amino acid biosynthetic process"/>
    <property type="evidence" value="ECO:0007669"/>
    <property type="project" value="UniProtKB-KW"/>
</dbReference>
<dbReference type="GO" id="GO:0009073">
    <property type="term" value="P:aromatic amino acid family biosynthetic process"/>
    <property type="evidence" value="ECO:0007669"/>
    <property type="project" value="UniProtKB-KW"/>
</dbReference>
<dbReference type="GO" id="GO:0009423">
    <property type="term" value="P:chorismate biosynthetic process"/>
    <property type="evidence" value="ECO:0007669"/>
    <property type="project" value="UniProtKB-UniRule"/>
</dbReference>
<dbReference type="CDD" id="cd01556">
    <property type="entry name" value="EPSP_synthase"/>
    <property type="match status" value="1"/>
</dbReference>
<dbReference type="FunFam" id="3.65.10.10:FF:000003">
    <property type="entry name" value="3-phosphoshikimate 1-carboxyvinyltransferase"/>
    <property type="match status" value="1"/>
</dbReference>
<dbReference type="FunFam" id="3.65.10.10:FF:000004">
    <property type="entry name" value="3-phosphoshikimate 1-carboxyvinyltransferase"/>
    <property type="match status" value="1"/>
</dbReference>
<dbReference type="Gene3D" id="3.65.10.10">
    <property type="entry name" value="Enolpyruvate transferase domain"/>
    <property type="match status" value="2"/>
</dbReference>
<dbReference type="HAMAP" id="MF_00210">
    <property type="entry name" value="EPSP_synth"/>
    <property type="match status" value="1"/>
</dbReference>
<dbReference type="InterPro" id="IPR001986">
    <property type="entry name" value="Enolpyruvate_Tfrase_dom"/>
</dbReference>
<dbReference type="InterPro" id="IPR036968">
    <property type="entry name" value="Enolpyruvate_Tfrase_sf"/>
</dbReference>
<dbReference type="InterPro" id="IPR006264">
    <property type="entry name" value="EPSP_synthase"/>
</dbReference>
<dbReference type="InterPro" id="IPR023193">
    <property type="entry name" value="EPSP_synthase_CS"/>
</dbReference>
<dbReference type="InterPro" id="IPR013792">
    <property type="entry name" value="RNA3'P_cycl/enolpyr_Trfase_a/b"/>
</dbReference>
<dbReference type="NCBIfam" id="TIGR01356">
    <property type="entry name" value="aroA"/>
    <property type="match status" value="1"/>
</dbReference>
<dbReference type="PANTHER" id="PTHR21090">
    <property type="entry name" value="AROM/DEHYDROQUINATE SYNTHASE"/>
    <property type="match status" value="1"/>
</dbReference>
<dbReference type="PANTHER" id="PTHR21090:SF5">
    <property type="entry name" value="PENTAFUNCTIONAL AROM POLYPEPTIDE"/>
    <property type="match status" value="1"/>
</dbReference>
<dbReference type="Pfam" id="PF00275">
    <property type="entry name" value="EPSP_synthase"/>
    <property type="match status" value="1"/>
</dbReference>
<dbReference type="PIRSF" id="PIRSF000505">
    <property type="entry name" value="EPSPS"/>
    <property type="match status" value="1"/>
</dbReference>
<dbReference type="SUPFAM" id="SSF55205">
    <property type="entry name" value="EPT/RTPC-like"/>
    <property type="match status" value="1"/>
</dbReference>
<dbReference type="PROSITE" id="PS00104">
    <property type="entry name" value="EPSP_SYNTHASE_1"/>
    <property type="match status" value="1"/>
</dbReference>
<dbReference type="PROSITE" id="PS00885">
    <property type="entry name" value="EPSP_SYNTHASE_2"/>
    <property type="match status" value="1"/>
</dbReference>